<dbReference type="EC" id="3.1.26.5" evidence="1"/>
<dbReference type="EMBL" id="CP000270">
    <property type="protein sequence ID" value="ABE32967.1"/>
    <property type="molecule type" value="Genomic_DNA"/>
</dbReference>
<dbReference type="SMR" id="Q13SH2"/>
<dbReference type="STRING" id="266265.Bxe_A4464"/>
<dbReference type="KEGG" id="bxb:DR64_2136"/>
<dbReference type="KEGG" id="bxe:Bxe_A4464"/>
<dbReference type="eggNOG" id="COG0594">
    <property type="taxonomic scope" value="Bacteria"/>
</dbReference>
<dbReference type="Proteomes" id="UP000001817">
    <property type="component" value="Chromosome 1"/>
</dbReference>
<dbReference type="GO" id="GO:0030677">
    <property type="term" value="C:ribonuclease P complex"/>
    <property type="evidence" value="ECO:0007669"/>
    <property type="project" value="TreeGrafter"/>
</dbReference>
<dbReference type="GO" id="GO:0042781">
    <property type="term" value="F:3'-tRNA processing endoribonuclease activity"/>
    <property type="evidence" value="ECO:0007669"/>
    <property type="project" value="TreeGrafter"/>
</dbReference>
<dbReference type="GO" id="GO:0004526">
    <property type="term" value="F:ribonuclease P activity"/>
    <property type="evidence" value="ECO:0007669"/>
    <property type="project" value="UniProtKB-UniRule"/>
</dbReference>
<dbReference type="GO" id="GO:0000049">
    <property type="term" value="F:tRNA binding"/>
    <property type="evidence" value="ECO:0007669"/>
    <property type="project" value="UniProtKB-UniRule"/>
</dbReference>
<dbReference type="GO" id="GO:0001682">
    <property type="term" value="P:tRNA 5'-leader removal"/>
    <property type="evidence" value="ECO:0007669"/>
    <property type="project" value="UniProtKB-UniRule"/>
</dbReference>
<dbReference type="Gene3D" id="3.30.230.10">
    <property type="match status" value="1"/>
</dbReference>
<dbReference type="HAMAP" id="MF_00227">
    <property type="entry name" value="RNase_P"/>
    <property type="match status" value="1"/>
</dbReference>
<dbReference type="InterPro" id="IPR020568">
    <property type="entry name" value="Ribosomal_Su5_D2-typ_SF"/>
</dbReference>
<dbReference type="InterPro" id="IPR014721">
    <property type="entry name" value="Ribsml_uS5_D2-typ_fold_subgr"/>
</dbReference>
<dbReference type="InterPro" id="IPR000100">
    <property type="entry name" value="RNase_P"/>
</dbReference>
<dbReference type="InterPro" id="IPR020539">
    <property type="entry name" value="RNase_P_CS"/>
</dbReference>
<dbReference type="NCBIfam" id="TIGR00188">
    <property type="entry name" value="rnpA"/>
    <property type="match status" value="1"/>
</dbReference>
<dbReference type="PANTHER" id="PTHR33992">
    <property type="entry name" value="RIBONUCLEASE P PROTEIN COMPONENT"/>
    <property type="match status" value="1"/>
</dbReference>
<dbReference type="PANTHER" id="PTHR33992:SF1">
    <property type="entry name" value="RIBONUCLEASE P PROTEIN COMPONENT"/>
    <property type="match status" value="1"/>
</dbReference>
<dbReference type="Pfam" id="PF00825">
    <property type="entry name" value="Ribonuclease_P"/>
    <property type="match status" value="1"/>
</dbReference>
<dbReference type="SUPFAM" id="SSF54211">
    <property type="entry name" value="Ribosomal protein S5 domain 2-like"/>
    <property type="match status" value="1"/>
</dbReference>
<dbReference type="PROSITE" id="PS00648">
    <property type="entry name" value="RIBONUCLEASE_P"/>
    <property type="match status" value="1"/>
</dbReference>
<gene>
    <name evidence="1" type="primary">rnpA</name>
    <name type="ordered locus">Bxeno_A4429</name>
    <name type="ORF">Bxe_A4464</name>
</gene>
<proteinExistence type="inferred from homology"/>
<evidence type="ECO:0000255" key="1">
    <source>
        <dbReference type="HAMAP-Rule" id="MF_00227"/>
    </source>
</evidence>
<feature type="chain" id="PRO_1000021386" description="Ribonuclease P protein component">
    <location>
        <begin position="1"/>
        <end position="139"/>
    </location>
</feature>
<keyword id="KW-0255">Endonuclease</keyword>
<keyword id="KW-0378">Hydrolase</keyword>
<keyword id="KW-0540">Nuclease</keyword>
<keyword id="KW-1185">Reference proteome</keyword>
<keyword id="KW-0694">RNA-binding</keyword>
<keyword id="KW-0819">tRNA processing</keyword>
<sequence length="139" mass="15819">MRAQAAFPKAARLLKTDEFSSVFRLRPWRRTAHFVVYGRPTGNEARLGLVIGKKYAPRAATRNLVRRIAREAFRLRRAEFGGWDVLLRLHTRFDKKALPSASSPPLRALCRSEIEALLDKAAREVTRREAPPAEAPKTE</sequence>
<accession>Q13SH2</accession>
<reference key="1">
    <citation type="journal article" date="2006" name="Proc. Natl. Acad. Sci. U.S.A.">
        <title>Burkholderia xenovorans LB400 harbors a multi-replicon, 9.73-Mbp genome shaped for versatility.</title>
        <authorList>
            <person name="Chain P.S.G."/>
            <person name="Denef V.J."/>
            <person name="Konstantinidis K.T."/>
            <person name="Vergez L.M."/>
            <person name="Agullo L."/>
            <person name="Reyes V.L."/>
            <person name="Hauser L."/>
            <person name="Cordova M."/>
            <person name="Gomez L."/>
            <person name="Gonzalez M."/>
            <person name="Land M."/>
            <person name="Lao V."/>
            <person name="Larimer F."/>
            <person name="LiPuma J.J."/>
            <person name="Mahenthiralingam E."/>
            <person name="Malfatti S.A."/>
            <person name="Marx C.J."/>
            <person name="Parnell J.J."/>
            <person name="Ramette A."/>
            <person name="Richardson P."/>
            <person name="Seeger M."/>
            <person name="Smith D."/>
            <person name="Spilker T."/>
            <person name="Sul W.J."/>
            <person name="Tsoi T.V."/>
            <person name="Ulrich L.E."/>
            <person name="Zhulin I.B."/>
            <person name="Tiedje J.M."/>
        </authorList>
    </citation>
    <scope>NUCLEOTIDE SEQUENCE [LARGE SCALE GENOMIC DNA]</scope>
    <source>
        <strain>LB400</strain>
    </source>
</reference>
<name>RNPA_PARXL</name>
<organism>
    <name type="scientific">Paraburkholderia xenovorans (strain LB400)</name>
    <dbReference type="NCBI Taxonomy" id="266265"/>
    <lineage>
        <taxon>Bacteria</taxon>
        <taxon>Pseudomonadati</taxon>
        <taxon>Pseudomonadota</taxon>
        <taxon>Betaproteobacteria</taxon>
        <taxon>Burkholderiales</taxon>
        <taxon>Burkholderiaceae</taxon>
        <taxon>Paraburkholderia</taxon>
    </lineage>
</organism>
<protein>
    <recommendedName>
        <fullName evidence="1">Ribonuclease P protein component</fullName>
        <shortName evidence="1">RNase P protein</shortName>
        <shortName evidence="1">RNaseP protein</shortName>
        <ecNumber evidence="1">3.1.26.5</ecNumber>
    </recommendedName>
    <alternativeName>
        <fullName evidence="1">Protein C5</fullName>
    </alternativeName>
</protein>
<comment type="function">
    <text evidence="1">RNaseP catalyzes the removal of the 5'-leader sequence from pre-tRNA to produce the mature 5'-terminus. It can also cleave other RNA substrates such as 4.5S RNA. The protein component plays an auxiliary but essential role in vivo by binding to the 5'-leader sequence and broadening the substrate specificity of the ribozyme.</text>
</comment>
<comment type="catalytic activity">
    <reaction evidence="1">
        <text>Endonucleolytic cleavage of RNA, removing 5'-extranucleotides from tRNA precursor.</text>
        <dbReference type="EC" id="3.1.26.5"/>
    </reaction>
</comment>
<comment type="subunit">
    <text evidence="1">Consists of a catalytic RNA component (M1 or rnpB) and a protein subunit.</text>
</comment>
<comment type="similarity">
    <text evidence="1">Belongs to the RnpA family.</text>
</comment>